<dbReference type="EC" id="2.1.2.9" evidence="1"/>
<dbReference type="EMBL" id="CP000250">
    <property type="protein sequence ID" value="ABD05385.1"/>
    <property type="molecule type" value="Genomic_DNA"/>
</dbReference>
<dbReference type="RefSeq" id="WP_011439575.1">
    <property type="nucleotide sequence ID" value="NC_007778.1"/>
</dbReference>
<dbReference type="SMR" id="Q2J2C5"/>
<dbReference type="STRING" id="316058.RPB_0674"/>
<dbReference type="KEGG" id="rpb:RPB_0674"/>
<dbReference type="eggNOG" id="COG0223">
    <property type="taxonomic scope" value="Bacteria"/>
</dbReference>
<dbReference type="HOGENOM" id="CLU_033347_1_2_5"/>
<dbReference type="OrthoDB" id="9802815at2"/>
<dbReference type="Proteomes" id="UP000008809">
    <property type="component" value="Chromosome"/>
</dbReference>
<dbReference type="GO" id="GO:0005829">
    <property type="term" value="C:cytosol"/>
    <property type="evidence" value="ECO:0007669"/>
    <property type="project" value="TreeGrafter"/>
</dbReference>
<dbReference type="GO" id="GO:0004479">
    <property type="term" value="F:methionyl-tRNA formyltransferase activity"/>
    <property type="evidence" value="ECO:0007669"/>
    <property type="project" value="UniProtKB-UniRule"/>
</dbReference>
<dbReference type="CDD" id="cd08646">
    <property type="entry name" value="FMT_core_Met-tRNA-FMT_N"/>
    <property type="match status" value="1"/>
</dbReference>
<dbReference type="CDD" id="cd08704">
    <property type="entry name" value="Met_tRNA_FMT_C"/>
    <property type="match status" value="1"/>
</dbReference>
<dbReference type="Gene3D" id="3.10.25.10">
    <property type="entry name" value="Formyl transferase, C-terminal domain"/>
    <property type="match status" value="1"/>
</dbReference>
<dbReference type="Gene3D" id="3.40.50.170">
    <property type="entry name" value="Formyl transferase, N-terminal domain"/>
    <property type="match status" value="1"/>
</dbReference>
<dbReference type="HAMAP" id="MF_00182">
    <property type="entry name" value="Formyl_trans"/>
    <property type="match status" value="1"/>
</dbReference>
<dbReference type="InterPro" id="IPR005794">
    <property type="entry name" value="Fmt"/>
</dbReference>
<dbReference type="InterPro" id="IPR005793">
    <property type="entry name" value="Formyl_trans_C"/>
</dbReference>
<dbReference type="InterPro" id="IPR037022">
    <property type="entry name" value="Formyl_trans_C_sf"/>
</dbReference>
<dbReference type="InterPro" id="IPR002376">
    <property type="entry name" value="Formyl_transf_N"/>
</dbReference>
<dbReference type="InterPro" id="IPR036477">
    <property type="entry name" value="Formyl_transf_N_sf"/>
</dbReference>
<dbReference type="InterPro" id="IPR011034">
    <property type="entry name" value="Formyl_transferase-like_C_sf"/>
</dbReference>
<dbReference type="InterPro" id="IPR001555">
    <property type="entry name" value="GART_AS"/>
</dbReference>
<dbReference type="InterPro" id="IPR044135">
    <property type="entry name" value="Met-tRNA-FMT_C"/>
</dbReference>
<dbReference type="InterPro" id="IPR041711">
    <property type="entry name" value="Met-tRNA-FMT_N"/>
</dbReference>
<dbReference type="NCBIfam" id="TIGR00460">
    <property type="entry name" value="fmt"/>
    <property type="match status" value="1"/>
</dbReference>
<dbReference type="PANTHER" id="PTHR11138">
    <property type="entry name" value="METHIONYL-TRNA FORMYLTRANSFERASE"/>
    <property type="match status" value="1"/>
</dbReference>
<dbReference type="PANTHER" id="PTHR11138:SF5">
    <property type="entry name" value="METHIONYL-TRNA FORMYLTRANSFERASE, MITOCHONDRIAL"/>
    <property type="match status" value="1"/>
</dbReference>
<dbReference type="Pfam" id="PF02911">
    <property type="entry name" value="Formyl_trans_C"/>
    <property type="match status" value="1"/>
</dbReference>
<dbReference type="Pfam" id="PF00551">
    <property type="entry name" value="Formyl_trans_N"/>
    <property type="match status" value="1"/>
</dbReference>
<dbReference type="SUPFAM" id="SSF50486">
    <property type="entry name" value="FMT C-terminal domain-like"/>
    <property type="match status" value="1"/>
</dbReference>
<dbReference type="SUPFAM" id="SSF53328">
    <property type="entry name" value="Formyltransferase"/>
    <property type="match status" value="1"/>
</dbReference>
<dbReference type="PROSITE" id="PS00373">
    <property type="entry name" value="GART"/>
    <property type="match status" value="1"/>
</dbReference>
<organism>
    <name type="scientific">Rhodopseudomonas palustris (strain HaA2)</name>
    <dbReference type="NCBI Taxonomy" id="316058"/>
    <lineage>
        <taxon>Bacteria</taxon>
        <taxon>Pseudomonadati</taxon>
        <taxon>Pseudomonadota</taxon>
        <taxon>Alphaproteobacteria</taxon>
        <taxon>Hyphomicrobiales</taxon>
        <taxon>Nitrobacteraceae</taxon>
        <taxon>Rhodopseudomonas</taxon>
    </lineage>
</organism>
<sequence length="312" mass="33153">MPLRLVFMGTPDFAVPTLLALSAYGHDIAAVYSREPKPAGRGMKLQHSPVAQEAQRLGIPVLTPKTLRTDEALAEFRSHEADAAVVVAYGMILPQAILDAPKLGCYNLHGSLLPRWRGAAPLNRAIMAGDAESGVMVMKMDVGLDTGDVAMAERIAITDAMTVTDLHDALARLGADLMVRAMAALERGGLQLARQSEHGVSYAAKIDKAEAKIDFARPAQAVLRHIHGLSPFPGAWCELPIDGEAVRVKILRCALADGRGAPGEMLGDDLTIACADGAIRVLQLQRAGKQPMSADEFLRGTPIAKGVRVSSS</sequence>
<proteinExistence type="inferred from homology"/>
<keyword id="KW-0648">Protein biosynthesis</keyword>
<keyword id="KW-1185">Reference proteome</keyword>
<keyword id="KW-0808">Transferase</keyword>
<gene>
    <name evidence="1" type="primary">fmt</name>
    <name type="ordered locus">RPB_0674</name>
</gene>
<accession>Q2J2C5</accession>
<protein>
    <recommendedName>
        <fullName evidence="1">Methionyl-tRNA formyltransferase</fullName>
        <ecNumber evidence="1">2.1.2.9</ecNumber>
    </recommendedName>
</protein>
<feature type="chain" id="PRO_1000020141" description="Methionyl-tRNA formyltransferase">
    <location>
        <begin position="1"/>
        <end position="312"/>
    </location>
</feature>
<feature type="binding site" evidence="1">
    <location>
        <begin position="111"/>
        <end position="114"/>
    </location>
    <ligand>
        <name>(6S)-5,6,7,8-tetrahydrofolate</name>
        <dbReference type="ChEBI" id="CHEBI:57453"/>
    </ligand>
</feature>
<reference key="1">
    <citation type="submission" date="2006-01" db="EMBL/GenBank/DDBJ databases">
        <title>Complete sequence of Rhodopseudomonas palustris HaA2.</title>
        <authorList>
            <consortium name="US DOE Joint Genome Institute"/>
            <person name="Copeland A."/>
            <person name="Lucas S."/>
            <person name="Lapidus A."/>
            <person name="Barry K."/>
            <person name="Detter J.C."/>
            <person name="Glavina T."/>
            <person name="Hammon N."/>
            <person name="Israni S."/>
            <person name="Pitluck S."/>
            <person name="Chain P."/>
            <person name="Malfatti S."/>
            <person name="Shin M."/>
            <person name="Vergez L."/>
            <person name="Schmutz J."/>
            <person name="Larimer F."/>
            <person name="Land M."/>
            <person name="Hauser L."/>
            <person name="Pelletier D.A."/>
            <person name="Kyrpides N."/>
            <person name="Anderson I."/>
            <person name="Oda Y."/>
            <person name="Harwood C.S."/>
            <person name="Richardson P."/>
        </authorList>
    </citation>
    <scope>NUCLEOTIDE SEQUENCE [LARGE SCALE GENOMIC DNA]</scope>
    <source>
        <strain>HaA2</strain>
    </source>
</reference>
<evidence type="ECO:0000255" key="1">
    <source>
        <dbReference type="HAMAP-Rule" id="MF_00182"/>
    </source>
</evidence>
<comment type="function">
    <text evidence="1">Attaches a formyl group to the free amino group of methionyl-tRNA(fMet). The formyl group appears to play a dual role in the initiator identity of N-formylmethionyl-tRNA by promoting its recognition by IF2 and preventing the misappropriation of this tRNA by the elongation apparatus.</text>
</comment>
<comment type="catalytic activity">
    <reaction evidence="1">
        <text>L-methionyl-tRNA(fMet) + (6R)-10-formyltetrahydrofolate = N-formyl-L-methionyl-tRNA(fMet) + (6S)-5,6,7,8-tetrahydrofolate + H(+)</text>
        <dbReference type="Rhea" id="RHEA:24380"/>
        <dbReference type="Rhea" id="RHEA-COMP:9952"/>
        <dbReference type="Rhea" id="RHEA-COMP:9953"/>
        <dbReference type="ChEBI" id="CHEBI:15378"/>
        <dbReference type="ChEBI" id="CHEBI:57453"/>
        <dbReference type="ChEBI" id="CHEBI:78530"/>
        <dbReference type="ChEBI" id="CHEBI:78844"/>
        <dbReference type="ChEBI" id="CHEBI:195366"/>
        <dbReference type="EC" id="2.1.2.9"/>
    </reaction>
</comment>
<comment type="similarity">
    <text evidence="1">Belongs to the Fmt family.</text>
</comment>
<name>FMT_RHOP2</name>